<protein>
    <recommendedName>
        <fullName evidence="1">D-serine dehydratase</fullName>
        <ecNumber evidence="1">4.3.1.18</ecNumber>
    </recommendedName>
    <alternativeName>
        <fullName evidence="1">D-serine deaminase</fullName>
        <shortName evidence="1">DSD</shortName>
    </alternativeName>
</protein>
<name>SDHD_ECO45</name>
<gene>
    <name evidence="1" type="primary">dsdA</name>
    <name type="ordered locus">ECS88_2560</name>
</gene>
<accession>B7MH26</accession>
<proteinExistence type="inferred from homology"/>
<feature type="chain" id="PRO_1000197940" description="D-serine dehydratase">
    <location>
        <begin position="1"/>
        <end position="442"/>
    </location>
</feature>
<feature type="modified residue" description="N6-(pyridoxal phosphate)lysine" evidence="1">
    <location>
        <position position="118"/>
    </location>
</feature>
<comment type="catalytic activity">
    <reaction evidence="1">
        <text>D-serine = pyruvate + NH4(+)</text>
        <dbReference type="Rhea" id="RHEA:13977"/>
        <dbReference type="ChEBI" id="CHEBI:15361"/>
        <dbReference type="ChEBI" id="CHEBI:28938"/>
        <dbReference type="ChEBI" id="CHEBI:35247"/>
        <dbReference type="EC" id="4.3.1.18"/>
    </reaction>
</comment>
<comment type="cofactor">
    <cofactor evidence="1">
        <name>pyridoxal 5'-phosphate</name>
        <dbReference type="ChEBI" id="CHEBI:597326"/>
    </cofactor>
</comment>
<comment type="subunit">
    <text evidence="1">Monomer.</text>
</comment>
<comment type="similarity">
    <text evidence="1">Belongs to the serine/threonine dehydratase family. DsdA subfamily.</text>
</comment>
<dbReference type="EC" id="4.3.1.18" evidence="1"/>
<dbReference type="EMBL" id="CU928161">
    <property type="protein sequence ID" value="CAR03835.1"/>
    <property type="molecule type" value="Genomic_DNA"/>
</dbReference>
<dbReference type="RefSeq" id="WP_000426389.1">
    <property type="nucleotide sequence ID" value="NC_011742.1"/>
</dbReference>
<dbReference type="SMR" id="B7MH26"/>
<dbReference type="KEGG" id="ecz:ECS88_2560"/>
<dbReference type="HOGENOM" id="CLU_035707_0_0_6"/>
<dbReference type="Proteomes" id="UP000000747">
    <property type="component" value="Chromosome"/>
</dbReference>
<dbReference type="GO" id="GO:0008721">
    <property type="term" value="F:D-serine ammonia-lyase activity"/>
    <property type="evidence" value="ECO:0007669"/>
    <property type="project" value="UniProtKB-EC"/>
</dbReference>
<dbReference type="GO" id="GO:0016836">
    <property type="term" value="F:hydro-lyase activity"/>
    <property type="evidence" value="ECO:0007669"/>
    <property type="project" value="UniProtKB-UniRule"/>
</dbReference>
<dbReference type="GO" id="GO:0030170">
    <property type="term" value="F:pyridoxal phosphate binding"/>
    <property type="evidence" value="ECO:0007669"/>
    <property type="project" value="InterPro"/>
</dbReference>
<dbReference type="GO" id="GO:0036088">
    <property type="term" value="P:D-serine catabolic process"/>
    <property type="evidence" value="ECO:0007669"/>
    <property type="project" value="TreeGrafter"/>
</dbReference>
<dbReference type="GO" id="GO:0009097">
    <property type="term" value="P:isoleucine biosynthetic process"/>
    <property type="evidence" value="ECO:0007669"/>
    <property type="project" value="TreeGrafter"/>
</dbReference>
<dbReference type="CDD" id="cd06447">
    <property type="entry name" value="D-Ser-dehyd"/>
    <property type="match status" value="1"/>
</dbReference>
<dbReference type="FunFam" id="3.40.50.1100:FF:000018">
    <property type="entry name" value="D-serine dehydratase"/>
    <property type="match status" value="1"/>
</dbReference>
<dbReference type="Gene3D" id="3.40.50.1100">
    <property type="match status" value="2"/>
</dbReference>
<dbReference type="HAMAP" id="MF_01030">
    <property type="entry name" value="D_Ser_dehydrat"/>
    <property type="match status" value="1"/>
</dbReference>
<dbReference type="InterPro" id="IPR011780">
    <property type="entry name" value="D_Ser_am_lyase"/>
</dbReference>
<dbReference type="InterPro" id="IPR050147">
    <property type="entry name" value="Ser/Thr_Dehydratase"/>
</dbReference>
<dbReference type="InterPro" id="IPR000634">
    <property type="entry name" value="Ser/Thr_deHydtase_PyrdxlP-BS"/>
</dbReference>
<dbReference type="InterPro" id="IPR001926">
    <property type="entry name" value="TrpB-like_PALP"/>
</dbReference>
<dbReference type="InterPro" id="IPR036052">
    <property type="entry name" value="TrpB-like_PALP_sf"/>
</dbReference>
<dbReference type="NCBIfam" id="TIGR02035">
    <property type="entry name" value="D_Ser_am_lyase"/>
    <property type="match status" value="1"/>
</dbReference>
<dbReference type="NCBIfam" id="NF002823">
    <property type="entry name" value="PRK02991.1"/>
    <property type="match status" value="1"/>
</dbReference>
<dbReference type="PANTHER" id="PTHR48078:SF9">
    <property type="entry name" value="D-SERINE DEHYDRATASE"/>
    <property type="match status" value="1"/>
</dbReference>
<dbReference type="PANTHER" id="PTHR48078">
    <property type="entry name" value="THREONINE DEHYDRATASE, MITOCHONDRIAL-RELATED"/>
    <property type="match status" value="1"/>
</dbReference>
<dbReference type="Pfam" id="PF00291">
    <property type="entry name" value="PALP"/>
    <property type="match status" value="1"/>
</dbReference>
<dbReference type="SUPFAM" id="SSF53686">
    <property type="entry name" value="Tryptophan synthase beta subunit-like PLP-dependent enzymes"/>
    <property type="match status" value="1"/>
</dbReference>
<dbReference type="PROSITE" id="PS00165">
    <property type="entry name" value="DEHYDRATASE_SER_THR"/>
    <property type="match status" value="1"/>
</dbReference>
<evidence type="ECO:0000255" key="1">
    <source>
        <dbReference type="HAMAP-Rule" id="MF_01030"/>
    </source>
</evidence>
<sequence>MENAKMNSLIAQYPLVEDLVALKETTWFNPGTTSLAEGLPYVGLTEQDVQDAHARLSRFAPYLAKAFPETAAAGGIIESELVAIPAMQKRLEKEYHQPIAGQLLLKKDSHLPISGSIKARGGIYEVLAHAEKLALEAGLLTLEDDYSKLLSPEFKQFFSQYSIAVGSTGNLGLSIGIMSARIGFKVTVHMSADARAWKKAKLRSHGVTVVEYEQDYGVAVEEGRKAAQSDPNCFFIDDENSRTLFLGYSVAGQRLKAQFAQQGRIVNADNPLFVYLPCGVGGGPGGVAFGLKLAFGDHVHCFFAEPTHSPCMLLGVHTGLHDQISVQDIGIDNLTAADGLAVGRASGFVGRAMERLLDGFYTLSDQTMYDMLSWLAQEEGIRLEPSALAGMAGPQRVCASVSYQQMHGFSAEQLRNATHLVWATGGGMVPEEEMNQYLAKGR</sequence>
<reference key="1">
    <citation type="journal article" date="2009" name="PLoS Genet.">
        <title>Organised genome dynamics in the Escherichia coli species results in highly diverse adaptive paths.</title>
        <authorList>
            <person name="Touchon M."/>
            <person name="Hoede C."/>
            <person name="Tenaillon O."/>
            <person name="Barbe V."/>
            <person name="Baeriswyl S."/>
            <person name="Bidet P."/>
            <person name="Bingen E."/>
            <person name="Bonacorsi S."/>
            <person name="Bouchier C."/>
            <person name="Bouvet O."/>
            <person name="Calteau A."/>
            <person name="Chiapello H."/>
            <person name="Clermont O."/>
            <person name="Cruveiller S."/>
            <person name="Danchin A."/>
            <person name="Diard M."/>
            <person name="Dossat C."/>
            <person name="Karoui M.E."/>
            <person name="Frapy E."/>
            <person name="Garry L."/>
            <person name="Ghigo J.M."/>
            <person name="Gilles A.M."/>
            <person name="Johnson J."/>
            <person name="Le Bouguenec C."/>
            <person name="Lescat M."/>
            <person name="Mangenot S."/>
            <person name="Martinez-Jehanne V."/>
            <person name="Matic I."/>
            <person name="Nassif X."/>
            <person name="Oztas S."/>
            <person name="Petit M.A."/>
            <person name="Pichon C."/>
            <person name="Rouy Z."/>
            <person name="Ruf C.S."/>
            <person name="Schneider D."/>
            <person name="Tourret J."/>
            <person name="Vacherie B."/>
            <person name="Vallenet D."/>
            <person name="Medigue C."/>
            <person name="Rocha E.P.C."/>
            <person name="Denamur E."/>
        </authorList>
    </citation>
    <scope>NUCLEOTIDE SEQUENCE [LARGE SCALE GENOMIC DNA]</scope>
    <source>
        <strain>S88 / ExPEC</strain>
    </source>
</reference>
<organism>
    <name type="scientific">Escherichia coli O45:K1 (strain S88 / ExPEC)</name>
    <dbReference type="NCBI Taxonomy" id="585035"/>
    <lineage>
        <taxon>Bacteria</taxon>
        <taxon>Pseudomonadati</taxon>
        <taxon>Pseudomonadota</taxon>
        <taxon>Gammaproteobacteria</taxon>
        <taxon>Enterobacterales</taxon>
        <taxon>Enterobacteriaceae</taxon>
        <taxon>Escherichia</taxon>
    </lineage>
</organism>
<keyword id="KW-0456">Lyase</keyword>
<keyword id="KW-0663">Pyridoxal phosphate</keyword>
<keyword id="KW-1185">Reference proteome</keyword>